<accession>P0A7G3</accession>
<accession>P09170</accession>
<reference key="1">
    <citation type="journal article" date="2002" name="Proc. Natl. Acad. Sci. U.S.A.">
        <title>Extensive mosaic structure revealed by the complete genome sequence of uropathogenic Escherichia coli.</title>
        <authorList>
            <person name="Welch R.A."/>
            <person name="Burland V."/>
            <person name="Plunkett G. III"/>
            <person name="Redford P."/>
            <person name="Roesch P."/>
            <person name="Rasko D."/>
            <person name="Buckles E.L."/>
            <person name="Liou S.-R."/>
            <person name="Boutin A."/>
            <person name="Hackett J."/>
            <person name="Stroud D."/>
            <person name="Mayhew G.F."/>
            <person name="Rose D.J."/>
            <person name="Zhou S."/>
            <person name="Schwartz D.C."/>
            <person name="Perna N.T."/>
            <person name="Mobley H.L.T."/>
            <person name="Donnenberg M.S."/>
            <person name="Blattner F.R."/>
        </authorList>
    </citation>
    <scope>NUCLEOTIDE SEQUENCE [LARGE SCALE GENOMIC DNA]</scope>
    <source>
        <strain>CFT073 / ATCC 700928 / UPEC</strain>
    </source>
</reference>
<protein>
    <recommendedName>
        <fullName evidence="2">Ribosome-binding factor A</fullName>
    </recommendedName>
</protein>
<organism>
    <name type="scientific">Escherichia coli O6:H1 (strain CFT073 / ATCC 700928 / UPEC)</name>
    <dbReference type="NCBI Taxonomy" id="199310"/>
    <lineage>
        <taxon>Bacteria</taxon>
        <taxon>Pseudomonadati</taxon>
        <taxon>Pseudomonadota</taxon>
        <taxon>Gammaproteobacteria</taxon>
        <taxon>Enterobacterales</taxon>
        <taxon>Enterobacteriaceae</taxon>
        <taxon>Escherichia</taxon>
    </lineage>
</organism>
<feature type="initiator methionine" description="Removed" evidence="1">
    <location>
        <position position="1"/>
    </location>
</feature>
<feature type="chain" id="PRO_0000102660" description="Ribosome-binding factor A">
    <location>
        <begin position="2"/>
        <end position="133"/>
    </location>
</feature>
<name>RBFA_ECOL6</name>
<evidence type="ECO:0000250" key="1"/>
<evidence type="ECO:0000255" key="2">
    <source>
        <dbReference type="HAMAP-Rule" id="MF_00003"/>
    </source>
</evidence>
<evidence type="ECO:0000305" key="3"/>
<sequence length="133" mass="15154">MAKEFGRPQRVAQEMQKEIALILQREIKDPRLGMMTTVSGVEMSRDLAYAKVYVTFLNDKDEDAVKAGIKALQEASGFIRSLLGKAMRLRIVPELTFFYDNSLVEGMRMSNLVTSVVKHDEERRVNPDDSKED</sequence>
<comment type="function">
    <text evidence="2">One of several proteins that assist in the late maturation steps of the functional core of the 30S ribosomal subunit. Associates with free 30S ribosomal subunits (but not with 30S subunits that are part of 70S ribosomes or polysomes). Required for efficient processing of 16S rRNA. May interact with the 5'-terminal helix region of 16S rRNA.</text>
</comment>
<comment type="subunit">
    <text evidence="2">Monomer. Binds 30S ribosomal subunits, but not 50S ribosomal subunits or 70S ribosomes.</text>
</comment>
<comment type="subcellular location">
    <subcellularLocation>
        <location evidence="2">Cytoplasm</location>
    </subcellularLocation>
</comment>
<comment type="similarity">
    <text evidence="2">Belongs to the RbfA family.</text>
</comment>
<comment type="sequence caution" evidence="3">
    <conflict type="erroneous initiation">
        <sequence resource="EMBL-CDS" id="AAN82364"/>
    </conflict>
    <text>Extended N-terminus.</text>
</comment>
<dbReference type="EMBL" id="AE014075">
    <property type="protein sequence ID" value="AAN82364.1"/>
    <property type="status" value="ALT_INIT"/>
    <property type="molecule type" value="Genomic_DNA"/>
</dbReference>
<dbReference type="RefSeq" id="WP_001040205.1">
    <property type="nucleotide sequence ID" value="NZ_CP051263.1"/>
</dbReference>
<dbReference type="SMR" id="P0A7G3"/>
<dbReference type="STRING" id="199310.c3923"/>
<dbReference type="GeneID" id="93778816"/>
<dbReference type="KEGG" id="ecc:c3923"/>
<dbReference type="eggNOG" id="COG0858">
    <property type="taxonomic scope" value="Bacteria"/>
</dbReference>
<dbReference type="HOGENOM" id="CLU_089475_5_0_6"/>
<dbReference type="Proteomes" id="UP000001410">
    <property type="component" value="Chromosome"/>
</dbReference>
<dbReference type="GO" id="GO:0005829">
    <property type="term" value="C:cytosol"/>
    <property type="evidence" value="ECO:0007669"/>
    <property type="project" value="TreeGrafter"/>
</dbReference>
<dbReference type="GO" id="GO:0043024">
    <property type="term" value="F:ribosomal small subunit binding"/>
    <property type="evidence" value="ECO:0007669"/>
    <property type="project" value="TreeGrafter"/>
</dbReference>
<dbReference type="GO" id="GO:0030490">
    <property type="term" value="P:maturation of SSU-rRNA"/>
    <property type="evidence" value="ECO:0007669"/>
    <property type="project" value="UniProtKB-UniRule"/>
</dbReference>
<dbReference type="FunFam" id="3.30.300.20:FF:000007">
    <property type="entry name" value="Ribosome-binding factor A"/>
    <property type="match status" value="1"/>
</dbReference>
<dbReference type="Gene3D" id="3.30.300.20">
    <property type="match status" value="1"/>
</dbReference>
<dbReference type="HAMAP" id="MF_00003">
    <property type="entry name" value="RbfA"/>
    <property type="match status" value="1"/>
</dbReference>
<dbReference type="InterPro" id="IPR015946">
    <property type="entry name" value="KH_dom-like_a/b"/>
</dbReference>
<dbReference type="InterPro" id="IPR000238">
    <property type="entry name" value="RbfA"/>
</dbReference>
<dbReference type="InterPro" id="IPR023799">
    <property type="entry name" value="RbfA_dom_sf"/>
</dbReference>
<dbReference type="InterPro" id="IPR020053">
    <property type="entry name" value="Ribosome-bd_factorA_CS"/>
</dbReference>
<dbReference type="NCBIfam" id="TIGR00082">
    <property type="entry name" value="rbfA"/>
    <property type="match status" value="1"/>
</dbReference>
<dbReference type="PANTHER" id="PTHR33515">
    <property type="entry name" value="RIBOSOME-BINDING FACTOR A, CHLOROPLASTIC-RELATED"/>
    <property type="match status" value="1"/>
</dbReference>
<dbReference type="PANTHER" id="PTHR33515:SF1">
    <property type="entry name" value="RIBOSOME-BINDING FACTOR A, CHLOROPLASTIC-RELATED"/>
    <property type="match status" value="1"/>
</dbReference>
<dbReference type="Pfam" id="PF02033">
    <property type="entry name" value="RBFA"/>
    <property type="match status" value="1"/>
</dbReference>
<dbReference type="SUPFAM" id="SSF89919">
    <property type="entry name" value="Ribosome-binding factor A, RbfA"/>
    <property type="match status" value="1"/>
</dbReference>
<dbReference type="PROSITE" id="PS01319">
    <property type="entry name" value="RBFA"/>
    <property type="match status" value="1"/>
</dbReference>
<proteinExistence type="inferred from homology"/>
<keyword id="KW-0963">Cytoplasm</keyword>
<keyword id="KW-1185">Reference proteome</keyword>
<keyword id="KW-0690">Ribosome biogenesis</keyword>
<gene>
    <name evidence="2" type="primary">rbfA</name>
    <name type="ordered locus">c3923</name>
</gene>